<name>CAH_PECAS</name>
<feature type="signal peptide" evidence="2">
    <location>
        <begin position="1"/>
        <end position="19"/>
    </location>
</feature>
<feature type="chain" id="PRO_0000042160" description="Carbonic anhydrase">
    <location>
        <begin position="20"/>
        <end position="244"/>
    </location>
</feature>
<feature type="domain" description="Alpha-carbonic anhydrase" evidence="3">
    <location>
        <begin position="23"/>
        <end position="244"/>
    </location>
</feature>
<feature type="active site" description="Proton acceptor" evidence="3">
    <location>
        <position position="84"/>
    </location>
</feature>
<feature type="binding site" evidence="3">
    <location>
        <position position="109"/>
    </location>
    <ligand>
        <name>Zn(2+)</name>
        <dbReference type="ChEBI" id="CHEBI:29105"/>
        <note>catalytic</note>
    </ligand>
</feature>
<feature type="binding site" evidence="3">
    <location>
        <position position="111"/>
    </location>
    <ligand>
        <name>Zn(2+)</name>
        <dbReference type="ChEBI" id="CHEBI:29105"/>
        <note>catalytic</note>
    </ligand>
</feature>
<feature type="binding site" evidence="3">
    <location>
        <position position="128"/>
    </location>
    <ligand>
        <name>Zn(2+)</name>
        <dbReference type="ChEBI" id="CHEBI:29105"/>
        <note>catalytic</note>
    </ligand>
</feature>
<feature type="binding site" evidence="1">
    <location>
        <begin position="195"/>
        <end position="196"/>
    </location>
    <ligand>
        <name>substrate</name>
    </ligand>
</feature>
<feature type="disulfide bond" evidence="1">
    <location>
        <begin position="46"/>
        <end position="199"/>
    </location>
</feature>
<organism>
    <name type="scientific">Pectobacterium atrosepticum (strain SCRI 1043 / ATCC BAA-672)</name>
    <name type="common">Erwinia carotovora subsp. atroseptica</name>
    <dbReference type="NCBI Taxonomy" id="218491"/>
    <lineage>
        <taxon>Bacteria</taxon>
        <taxon>Pseudomonadati</taxon>
        <taxon>Pseudomonadota</taxon>
        <taxon>Gammaproteobacteria</taxon>
        <taxon>Enterobacterales</taxon>
        <taxon>Pectobacteriaceae</taxon>
        <taxon>Pectobacterium</taxon>
    </lineage>
</organism>
<accession>Q6DAJ6</accession>
<dbReference type="EC" id="4.2.1.1"/>
<dbReference type="EMBL" id="BX950851">
    <property type="protein sequence ID" value="CAG73177.1"/>
    <property type="molecule type" value="Genomic_DNA"/>
</dbReference>
<dbReference type="RefSeq" id="WP_011091892.1">
    <property type="nucleotide sequence ID" value="NC_004547.2"/>
</dbReference>
<dbReference type="SMR" id="Q6DAJ6"/>
<dbReference type="STRING" id="218491.ECA0257"/>
<dbReference type="KEGG" id="eca:ECA0257"/>
<dbReference type="PATRIC" id="fig|218491.5.peg.258"/>
<dbReference type="eggNOG" id="COG3338">
    <property type="taxonomic scope" value="Bacteria"/>
</dbReference>
<dbReference type="HOGENOM" id="CLU_039326_0_2_6"/>
<dbReference type="OrthoDB" id="5327615at2"/>
<dbReference type="Proteomes" id="UP000007966">
    <property type="component" value="Chromosome"/>
</dbReference>
<dbReference type="GO" id="GO:0042597">
    <property type="term" value="C:periplasmic space"/>
    <property type="evidence" value="ECO:0007669"/>
    <property type="project" value="UniProtKB-SubCell"/>
</dbReference>
<dbReference type="GO" id="GO:0004089">
    <property type="term" value="F:carbonate dehydratase activity"/>
    <property type="evidence" value="ECO:0007669"/>
    <property type="project" value="UniProtKB-EC"/>
</dbReference>
<dbReference type="GO" id="GO:0008270">
    <property type="term" value="F:zinc ion binding"/>
    <property type="evidence" value="ECO:0007669"/>
    <property type="project" value="InterPro"/>
</dbReference>
<dbReference type="CDD" id="cd03124">
    <property type="entry name" value="alpha_CA_prokaryotic_like"/>
    <property type="match status" value="1"/>
</dbReference>
<dbReference type="Gene3D" id="3.10.200.10">
    <property type="entry name" value="Alpha carbonic anhydrase"/>
    <property type="match status" value="1"/>
</dbReference>
<dbReference type="InterPro" id="IPR041891">
    <property type="entry name" value="Alpha_CA_prokaryot-like"/>
</dbReference>
<dbReference type="InterPro" id="IPR001148">
    <property type="entry name" value="CA_dom"/>
</dbReference>
<dbReference type="InterPro" id="IPR036398">
    <property type="entry name" value="CA_dom_sf"/>
</dbReference>
<dbReference type="InterPro" id="IPR023561">
    <property type="entry name" value="Carbonic_anhydrase_a-class"/>
</dbReference>
<dbReference type="InterPro" id="IPR018338">
    <property type="entry name" value="Carbonic_anhydrase_a-class_CS"/>
</dbReference>
<dbReference type="PANTHER" id="PTHR18952">
    <property type="entry name" value="CARBONIC ANHYDRASE"/>
    <property type="match status" value="1"/>
</dbReference>
<dbReference type="PANTHER" id="PTHR18952:SF265">
    <property type="entry name" value="CARBONIC ANHYDRASE"/>
    <property type="match status" value="1"/>
</dbReference>
<dbReference type="Pfam" id="PF00194">
    <property type="entry name" value="Carb_anhydrase"/>
    <property type="match status" value="1"/>
</dbReference>
<dbReference type="SMART" id="SM01057">
    <property type="entry name" value="Carb_anhydrase"/>
    <property type="match status" value="1"/>
</dbReference>
<dbReference type="SUPFAM" id="SSF51069">
    <property type="entry name" value="Carbonic anhydrase"/>
    <property type="match status" value="1"/>
</dbReference>
<dbReference type="PROSITE" id="PS00162">
    <property type="entry name" value="ALPHA_CA_1"/>
    <property type="match status" value="1"/>
</dbReference>
<dbReference type="PROSITE" id="PS51144">
    <property type="entry name" value="ALPHA_CA_2"/>
    <property type="match status" value="1"/>
</dbReference>
<keyword id="KW-1015">Disulfide bond</keyword>
<keyword id="KW-0456">Lyase</keyword>
<keyword id="KW-0479">Metal-binding</keyword>
<keyword id="KW-0574">Periplasm</keyword>
<keyword id="KW-1185">Reference proteome</keyword>
<keyword id="KW-0732">Signal</keyword>
<keyword id="KW-0862">Zinc</keyword>
<protein>
    <recommendedName>
        <fullName>Carbonic anhydrase</fullName>
        <ecNumber>4.2.1.1</ecNumber>
    </recommendedName>
    <alternativeName>
        <fullName>Carbonate dehydratase</fullName>
    </alternativeName>
</protein>
<gene>
    <name type="primary">cah</name>
    <name type="ordered locus">ECA0257</name>
</gene>
<reference key="1">
    <citation type="journal article" date="2004" name="Proc. Natl. Acad. Sci. U.S.A.">
        <title>Genome sequence of the enterobacterial phytopathogen Erwinia carotovora subsp. atroseptica and characterization of virulence factors.</title>
        <authorList>
            <person name="Bell K.S."/>
            <person name="Sebaihia M."/>
            <person name="Pritchard L."/>
            <person name="Holden M.T.G."/>
            <person name="Hyman L.J."/>
            <person name="Holeva M.C."/>
            <person name="Thomson N.R."/>
            <person name="Bentley S.D."/>
            <person name="Churcher L.J.C."/>
            <person name="Mungall K."/>
            <person name="Atkin R."/>
            <person name="Bason N."/>
            <person name="Brooks K."/>
            <person name="Chillingworth T."/>
            <person name="Clark K."/>
            <person name="Doggett J."/>
            <person name="Fraser A."/>
            <person name="Hance Z."/>
            <person name="Hauser H."/>
            <person name="Jagels K."/>
            <person name="Moule S."/>
            <person name="Norbertczak H."/>
            <person name="Ormond D."/>
            <person name="Price C."/>
            <person name="Quail M.A."/>
            <person name="Sanders M."/>
            <person name="Walker D."/>
            <person name="Whitehead S."/>
            <person name="Salmond G.P.C."/>
            <person name="Birch P.R.J."/>
            <person name="Parkhill J."/>
            <person name="Toth I.K."/>
        </authorList>
    </citation>
    <scope>NUCLEOTIDE SEQUENCE [LARGE SCALE GENOMIC DNA]</scope>
    <source>
        <strain>SCRI 1043 / ATCC BAA-672</strain>
    </source>
</reference>
<proteinExistence type="inferred from homology"/>
<sequence length="244" mass="26664">MKGKFSIALMLSACFSASASDSVHWGYEGSGDPAHWGKLSPDFSLCETGKNQSPVNIQQALNAQHDPLQLAFQSGTQQIINNGHTVQVNVSSGNTLLLDNETFALQQFHFHAPSENEIDGKQFPLEGHFVYKNADGALTVIALMFQEGAANPQLATAWQQIPAHVDQAEDVRTPIAIQALLPTSLNYYRFSGSLTTPPCSEGIRWLVLDHPVTASAEQINQFSSVMHHANNRPIQPLNGRIIIH</sequence>
<evidence type="ECO:0000250" key="1"/>
<evidence type="ECO:0000255" key="2"/>
<evidence type="ECO:0000255" key="3">
    <source>
        <dbReference type="PROSITE-ProRule" id="PRU01134"/>
    </source>
</evidence>
<evidence type="ECO:0000305" key="4"/>
<comment type="function">
    <text>Reversible hydration of carbon dioxide.</text>
</comment>
<comment type="catalytic activity">
    <reaction>
        <text>hydrogencarbonate + H(+) = CO2 + H2O</text>
        <dbReference type="Rhea" id="RHEA:10748"/>
        <dbReference type="ChEBI" id="CHEBI:15377"/>
        <dbReference type="ChEBI" id="CHEBI:15378"/>
        <dbReference type="ChEBI" id="CHEBI:16526"/>
        <dbReference type="ChEBI" id="CHEBI:17544"/>
        <dbReference type="EC" id="4.2.1.1"/>
    </reaction>
</comment>
<comment type="cofactor">
    <cofactor evidence="1">
        <name>Zn(2+)</name>
        <dbReference type="ChEBI" id="CHEBI:29105"/>
    </cofactor>
</comment>
<comment type="subcellular location">
    <subcellularLocation>
        <location evidence="4">Periplasm</location>
    </subcellularLocation>
</comment>
<comment type="similarity">
    <text evidence="4">Belongs to the alpha-carbonic anhydrase family.</text>
</comment>